<protein>
    <recommendedName>
        <fullName>Axial regulator YABBY 5</fullName>
    </recommendedName>
</protein>
<feature type="chain" id="PRO_0000133721" description="Axial regulator YABBY 5">
    <location>
        <begin position="1"/>
        <end position="164"/>
    </location>
</feature>
<feature type="zinc finger region" description="C4-type" evidence="1">
    <location>
        <begin position="16"/>
        <end position="43"/>
    </location>
</feature>
<reference key="1">
    <citation type="journal article" date="1999" name="Nature">
        <title>Sequence and analysis of chromosome 2 of the plant Arabidopsis thaliana.</title>
        <authorList>
            <person name="Lin X."/>
            <person name="Kaul S."/>
            <person name="Rounsley S.D."/>
            <person name="Shea T.P."/>
            <person name="Benito M.-I."/>
            <person name="Town C.D."/>
            <person name="Fujii C.Y."/>
            <person name="Mason T.M."/>
            <person name="Bowman C.L."/>
            <person name="Barnstead M.E."/>
            <person name="Feldblyum T.V."/>
            <person name="Buell C.R."/>
            <person name="Ketchum K.A."/>
            <person name="Lee J.J."/>
            <person name="Ronning C.M."/>
            <person name="Koo H.L."/>
            <person name="Moffat K.S."/>
            <person name="Cronin L.A."/>
            <person name="Shen M."/>
            <person name="Pai G."/>
            <person name="Van Aken S."/>
            <person name="Umayam L."/>
            <person name="Tallon L.J."/>
            <person name="Gill J.E."/>
            <person name="Adams M.D."/>
            <person name="Carrera A.J."/>
            <person name="Creasy T.H."/>
            <person name="Goodman H.M."/>
            <person name="Somerville C.R."/>
            <person name="Copenhaver G.P."/>
            <person name="Preuss D."/>
            <person name="Nierman W.C."/>
            <person name="White O."/>
            <person name="Eisen J.A."/>
            <person name="Salzberg S.L."/>
            <person name="Fraser C.M."/>
            <person name="Venter J.C."/>
        </authorList>
    </citation>
    <scope>NUCLEOTIDE SEQUENCE [LARGE SCALE GENOMIC DNA]</scope>
    <source>
        <strain>cv. Columbia</strain>
    </source>
</reference>
<reference key="2">
    <citation type="journal article" date="2017" name="Plant J.">
        <title>Araport11: a complete reannotation of the Arabidopsis thaliana reference genome.</title>
        <authorList>
            <person name="Cheng C.Y."/>
            <person name="Krishnakumar V."/>
            <person name="Chan A.P."/>
            <person name="Thibaud-Nissen F."/>
            <person name="Schobel S."/>
            <person name="Town C.D."/>
        </authorList>
    </citation>
    <scope>GENOME REANNOTATION</scope>
    <source>
        <strain>cv. Columbia</strain>
    </source>
</reference>
<reference key="3">
    <citation type="journal article" date="2002" name="Science">
        <title>Functional annotation of a full-length Arabidopsis cDNA collection.</title>
        <authorList>
            <person name="Seki M."/>
            <person name="Narusaka M."/>
            <person name="Kamiya A."/>
            <person name="Ishida J."/>
            <person name="Satou M."/>
            <person name="Sakurai T."/>
            <person name="Nakajima M."/>
            <person name="Enju A."/>
            <person name="Akiyama K."/>
            <person name="Oono Y."/>
            <person name="Muramatsu M."/>
            <person name="Hayashizaki Y."/>
            <person name="Kawai J."/>
            <person name="Carninci P."/>
            <person name="Itoh M."/>
            <person name="Ishii Y."/>
            <person name="Arakawa T."/>
            <person name="Shibata K."/>
            <person name="Shinagawa A."/>
            <person name="Shinozaki K."/>
        </authorList>
    </citation>
    <scope>NUCLEOTIDE SEQUENCE [LARGE SCALE MRNA]</scope>
    <source>
        <strain>cv. Columbia</strain>
    </source>
</reference>
<reference key="4">
    <citation type="journal article" date="2003" name="Science">
        <title>Empirical analysis of transcriptional activity in the Arabidopsis genome.</title>
        <authorList>
            <person name="Yamada K."/>
            <person name="Lim J."/>
            <person name="Dale J.M."/>
            <person name="Chen H."/>
            <person name="Shinn P."/>
            <person name="Palm C.J."/>
            <person name="Southwick A.M."/>
            <person name="Wu H.C."/>
            <person name="Kim C.J."/>
            <person name="Nguyen M."/>
            <person name="Pham P.K."/>
            <person name="Cheuk R.F."/>
            <person name="Karlin-Newmann G."/>
            <person name="Liu S.X."/>
            <person name="Lam B."/>
            <person name="Sakano H."/>
            <person name="Wu T."/>
            <person name="Yu G."/>
            <person name="Miranda M."/>
            <person name="Quach H.L."/>
            <person name="Tripp M."/>
            <person name="Chang C.H."/>
            <person name="Lee J.M."/>
            <person name="Toriumi M.J."/>
            <person name="Chan M.M."/>
            <person name="Tang C.C."/>
            <person name="Onodera C.S."/>
            <person name="Deng J.M."/>
            <person name="Akiyama K."/>
            <person name="Ansari Y."/>
            <person name="Arakawa T."/>
            <person name="Banh J."/>
            <person name="Banno F."/>
            <person name="Bowser L."/>
            <person name="Brooks S.Y."/>
            <person name="Carninci P."/>
            <person name="Chao Q."/>
            <person name="Choy N."/>
            <person name="Enju A."/>
            <person name="Goldsmith A.D."/>
            <person name="Gurjal M."/>
            <person name="Hansen N.F."/>
            <person name="Hayashizaki Y."/>
            <person name="Johnson-Hopson C."/>
            <person name="Hsuan V.W."/>
            <person name="Iida K."/>
            <person name="Karnes M."/>
            <person name="Khan S."/>
            <person name="Koesema E."/>
            <person name="Ishida J."/>
            <person name="Jiang P.X."/>
            <person name="Jones T."/>
            <person name="Kawai J."/>
            <person name="Kamiya A."/>
            <person name="Meyers C."/>
            <person name="Nakajima M."/>
            <person name="Narusaka M."/>
            <person name="Seki M."/>
            <person name="Sakurai T."/>
            <person name="Satou M."/>
            <person name="Tamse R."/>
            <person name="Vaysberg M."/>
            <person name="Wallender E.K."/>
            <person name="Wong C."/>
            <person name="Yamamura Y."/>
            <person name="Yuan S."/>
            <person name="Shinozaki K."/>
            <person name="Davis R.W."/>
            <person name="Theologis A."/>
            <person name="Ecker J.R."/>
        </authorList>
    </citation>
    <scope>NUCLEOTIDE SEQUENCE [LARGE SCALE MRNA]</scope>
    <source>
        <strain>cv. Columbia</strain>
    </source>
</reference>
<reference key="5">
    <citation type="journal article" date="2000" name="Curr. Opin. Plant Biol.">
        <title>The YABBY gene family and abaxial cell fate.</title>
        <authorList>
            <person name="Bowman J.L."/>
        </authorList>
    </citation>
    <scope>GENE FAMILY</scope>
    <scope>NOMENCLATURE</scope>
</reference>
<reference key="6">
    <citation type="journal article" date="2009" name="Plant Cell">
        <title>YABBYs and the transcriptional corepressors LEUNIG and LEUNIG_HOMOLOG maintain leaf polarity and meristem activity in Arabidopsis.</title>
        <authorList>
            <person name="Stahle M.I."/>
            <person name="Kuehlich J."/>
            <person name="Staron L."/>
            <person name="von Arnim A.G."/>
            <person name="Golz J.F."/>
        </authorList>
    </citation>
    <scope>FUNCTION</scope>
    <scope>DISRUPTION PHENOTYPE</scope>
    <scope>INTERACTION WITH LUG AND LUH</scope>
</reference>
<reference key="7">
    <citation type="journal article" date="2014" name="J. Genet. Genomics">
        <title>SPOROCYTELESS is a novel embryophyte-specific transcription repressor that interacts with TPL and TCP proteins in Arabidopsis.</title>
        <authorList>
            <person name="Chen G.H."/>
            <person name="Sun J.Y."/>
            <person name="Liu M."/>
            <person name="Liu J."/>
            <person name="Yang W.C."/>
        </authorList>
    </citation>
    <scope>INTERACTION WITH SPL/NZZ AND SPEAR2</scope>
</reference>
<gene>
    <name type="primary">YAB5</name>
    <name type="ordered locus">At2g26580</name>
    <name type="ORF">T9J22.25</name>
</gene>
<accession>Q8GW46</accession>
<accession>O48725</accession>
<comment type="function">
    <text evidence="2">Promotes adaxial cell identity. Regulates the initiation of embryonic shoot apical meristem (SAM) development.</text>
</comment>
<comment type="subunit">
    <text evidence="2 3">Binds to LUG and LUH; these complexes promote adaxial cell identity in leaves as well as embryonic shoot apical meristem (SAM) initiation and postembryonic SAM maintenance. Interacts with SPL/NZZ and SPEAR2 (PubMed:25527103).</text>
</comment>
<comment type="subcellular location">
    <subcellularLocation>
        <location evidence="1">Nucleus</location>
    </subcellularLocation>
</comment>
<comment type="disruption phenotype">
    <text evidence="2">Leaves polarity and growth defects.</text>
</comment>
<comment type="similarity">
    <text evidence="4">Belongs to the YABBY family.</text>
</comment>
<comment type="sequence caution" evidence="4">
    <conflict type="erroneous gene model prediction">
        <sequence resource="EMBL-CDS" id="AAC14507"/>
    </conflict>
</comment>
<dbReference type="EMBL" id="AC002505">
    <property type="protein sequence ID" value="AAC14507.1"/>
    <property type="status" value="ALT_SEQ"/>
    <property type="molecule type" value="Genomic_DNA"/>
</dbReference>
<dbReference type="EMBL" id="CP002685">
    <property type="protein sequence ID" value="AEC07860.1"/>
    <property type="molecule type" value="Genomic_DNA"/>
</dbReference>
<dbReference type="EMBL" id="CP002685">
    <property type="protein sequence ID" value="AEC07861.1"/>
    <property type="molecule type" value="Genomic_DNA"/>
</dbReference>
<dbReference type="EMBL" id="AK119091">
    <property type="protein sequence ID" value="BAC43665.1"/>
    <property type="molecule type" value="mRNA"/>
</dbReference>
<dbReference type="EMBL" id="BT003734">
    <property type="protein sequence ID" value="AAO39962.1"/>
    <property type="molecule type" value="mRNA"/>
</dbReference>
<dbReference type="PIR" id="T00991">
    <property type="entry name" value="T00991"/>
</dbReference>
<dbReference type="RefSeq" id="NP_850080.1">
    <property type="nucleotide sequence ID" value="NM_179749.3"/>
</dbReference>
<dbReference type="RefSeq" id="NP_850081.1">
    <property type="nucleotide sequence ID" value="NM_179750.3"/>
</dbReference>
<dbReference type="SMR" id="Q8GW46"/>
<dbReference type="BioGRID" id="2551">
    <property type="interactions" value="8"/>
</dbReference>
<dbReference type="FunCoup" id="Q8GW46">
    <property type="interactions" value="401"/>
</dbReference>
<dbReference type="IntAct" id="Q8GW46">
    <property type="interactions" value="8"/>
</dbReference>
<dbReference type="STRING" id="3702.Q8GW46"/>
<dbReference type="PaxDb" id="3702-AT2G26580.1"/>
<dbReference type="EnsemblPlants" id="AT2G26580.1">
    <property type="protein sequence ID" value="AT2G26580.1"/>
    <property type="gene ID" value="AT2G26580"/>
</dbReference>
<dbReference type="EnsemblPlants" id="AT2G26580.2">
    <property type="protein sequence ID" value="AT2G26580.2"/>
    <property type="gene ID" value="AT2G26580"/>
</dbReference>
<dbReference type="GeneID" id="817199"/>
<dbReference type="Gramene" id="AT2G26580.1">
    <property type="protein sequence ID" value="AT2G26580.1"/>
    <property type="gene ID" value="AT2G26580"/>
</dbReference>
<dbReference type="Gramene" id="AT2G26580.2">
    <property type="protein sequence ID" value="AT2G26580.2"/>
    <property type="gene ID" value="AT2G26580"/>
</dbReference>
<dbReference type="KEGG" id="ath:AT2G26580"/>
<dbReference type="Araport" id="AT2G26580"/>
<dbReference type="TAIR" id="AT2G26580">
    <property type="gene designation" value="YAB5"/>
</dbReference>
<dbReference type="eggNOG" id="ENOG502R9GD">
    <property type="taxonomic scope" value="Eukaryota"/>
</dbReference>
<dbReference type="HOGENOM" id="CLU_071156_0_1_1"/>
<dbReference type="InParanoid" id="Q8GW46"/>
<dbReference type="OMA" id="PEYRIEL"/>
<dbReference type="OrthoDB" id="667577at2759"/>
<dbReference type="PhylomeDB" id="Q8GW46"/>
<dbReference type="PRO" id="PR:Q8GW46"/>
<dbReference type="Proteomes" id="UP000006548">
    <property type="component" value="Chromosome 2"/>
</dbReference>
<dbReference type="ExpressionAtlas" id="Q8GW46">
    <property type="expression patterns" value="baseline and differential"/>
</dbReference>
<dbReference type="GO" id="GO:0005634">
    <property type="term" value="C:nucleus"/>
    <property type="evidence" value="ECO:0007669"/>
    <property type="project" value="UniProtKB-SubCell"/>
</dbReference>
<dbReference type="GO" id="GO:0003700">
    <property type="term" value="F:DNA-binding transcription factor activity"/>
    <property type="evidence" value="ECO:0000250"/>
    <property type="project" value="TAIR"/>
</dbReference>
<dbReference type="GO" id="GO:0000976">
    <property type="term" value="F:transcription cis-regulatory region binding"/>
    <property type="evidence" value="ECO:0000353"/>
    <property type="project" value="TAIR"/>
</dbReference>
<dbReference type="GO" id="GO:0008270">
    <property type="term" value="F:zinc ion binding"/>
    <property type="evidence" value="ECO:0007669"/>
    <property type="project" value="UniProtKB-KW"/>
</dbReference>
<dbReference type="GO" id="GO:0009944">
    <property type="term" value="P:polarity specification of adaxial/abaxial axis"/>
    <property type="evidence" value="ECO:0000315"/>
    <property type="project" value="UniProtKB"/>
</dbReference>
<dbReference type="GO" id="GO:0006355">
    <property type="term" value="P:regulation of DNA-templated transcription"/>
    <property type="evidence" value="ECO:0000304"/>
    <property type="project" value="TAIR"/>
</dbReference>
<dbReference type="GO" id="GO:2000024">
    <property type="term" value="P:regulation of leaf development"/>
    <property type="evidence" value="ECO:0000315"/>
    <property type="project" value="UniProtKB"/>
</dbReference>
<dbReference type="GO" id="GO:1902183">
    <property type="term" value="P:regulation of shoot apical meristem development"/>
    <property type="evidence" value="ECO:0000315"/>
    <property type="project" value="UniProtKB"/>
</dbReference>
<dbReference type="CDD" id="cd00084">
    <property type="entry name" value="HMG-box_SF"/>
    <property type="match status" value="1"/>
</dbReference>
<dbReference type="FunFam" id="1.10.30.10:FF:000012">
    <property type="entry name" value="axial regulator YABBY 5-like"/>
    <property type="match status" value="1"/>
</dbReference>
<dbReference type="Gene3D" id="1.10.30.10">
    <property type="entry name" value="High mobility group box domain"/>
    <property type="match status" value="1"/>
</dbReference>
<dbReference type="InterPro" id="IPR036910">
    <property type="entry name" value="HMG_box_dom_sf"/>
</dbReference>
<dbReference type="InterPro" id="IPR006780">
    <property type="entry name" value="YABBY"/>
</dbReference>
<dbReference type="InterPro" id="IPR056775">
    <property type="entry name" value="YABBY_C"/>
</dbReference>
<dbReference type="InterPro" id="IPR056776">
    <property type="entry name" value="YABBY_N"/>
</dbReference>
<dbReference type="PANTHER" id="PTHR31675:SF49">
    <property type="entry name" value="AXIAL REGULATOR YABBY 5"/>
    <property type="match status" value="1"/>
</dbReference>
<dbReference type="PANTHER" id="PTHR31675">
    <property type="entry name" value="PROTEIN YABBY 6-RELATED"/>
    <property type="match status" value="1"/>
</dbReference>
<dbReference type="Pfam" id="PF04690">
    <property type="entry name" value="YABBY"/>
    <property type="match status" value="1"/>
</dbReference>
<dbReference type="Pfam" id="PF24868">
    <property type="entry name" value="YABBY_N"/>
    <property type="match status" value="1"/>
</dbReference>
<dbReference type="SUPFAM" id="SSF47095">
    <property type="entry name" value="HMG-box"/>
    <property type="match status" value="1"/>
</dbReference>
<keyword id="KW-0238">DNA-binding</keyword>
<keyword id="KW-0479">Metal-binding</keyword>
<keyword id="KW-0539">Nucleus</keyword>
<keyword id="KW-1185">Reference proteome</keyword>
<keyword id="KW-0862">Zinc</keyword>
<keyword id="KW-0863">Zinc-finger</keyword>
<organism>
    <name type="scientific">Arabidopsis thaliana</name>
    <name type="common">Mouse-ear cress</name>
    <dbReference type="NCBI Taxonomy" id="3702"/>
    <lineage>
        <taxon>Eukaryota</taxon>
        <taxon>Viridiplantae</taxon>
        <taxon>Streptophyta</taxon>
        <taxon>Embryophyta</taxon>
        <taxon>Tracheophyta</taxon>
        <taxon>Spermatophyta</taxon>
        <taxon>Magnoliopsida</taxon>
        <taxon>eudicotyledons</taxon>
        <taxon>Gunneridae</taxon>
        <taxon>Pentapetalae</taxon>
        <taxon>rosids</taxon>
        <taxon>malvids</taxon>
        <taxon>Brassicales</taxon>
        <taxon>Brassicaceae</taxon>
        <taxon>Camelineae</taxon>
        <taxon>Arabidopsis</taxon>
    </lineage>
</organism>
<evidence type="ECO:0000250" key="1"/>
<evidence type="ECO:0000269" key="2">
    <source>
    </source>
</evidence>
<evidence type="ECO:0000269" key="3">
    <source>
    </source>
</evidence>
<evidence type="ECO:0000305" key="4"/>
<sequence length="164" mass="18505">MANSVMATEQLCYIPCNFCNIILAVNVPCSSLFDIVTVRCGHCTNLWSVNMAAALQSLSRPNFQATNYAVPEYGSSSRSHTKIPSRISTRTITEQRIVNRPPEKRQRVPSAYNQFIKEEIQRIKANNPDISHREAFSTAAKNWAHFPHIHFGLMLESNKQAKIA</sequence>
<name>YAB5_ARATH</name>
<proteinExistence type="evidence at protein level"/>